<sequence>MSTKKHTKTHSTYAFESNTNSVAASQMRNALNKLADSSKLDDAARAKFENELDSFFTLFRRYLVEKSSRTTLEWDKIKSPNPDEVVKYEIISQQPENVSNLSKLAVLKLNGGLGTSMGCVGPKSVIEVREGNTFLDLSVRQIEYLNRQYDSDVPLLLMNSFNTDKDTEHLIKKYSANRIRIRSFNQSRFPRVYKDSLLPVPTEYDSPLDAWYPPGHGDLFESLHVSGELDALIAQGREILFVSNGDNLGATVDLKILNHMIETGAEYIMELTDKTRADVKGGTLISYDGQVRLLEVAQVPKEHIDEFKNIRKFTNFNTNNLWINLKAVKRLIESSNLEMEIIPNQKTITRDGHEINVLQLETACGAAIRHFDGAHGVVVPRSRFLPVKTCSDLLLVKSDLFRLEHGSLKLDPSRFGPNPLIKLGSHFKKVSGFNARIPHIPKIVELDHLTITGNVFLGKDVTLRGTVIIVCSDGHKIDIPNGSILENVVVTGNLQILEH</sequence>
<name>UGPA1_YEAST</name>
<comment type="function">
    <text evidence="6">Plays a central role as a glucosyl donor in cellular metabolic pathways.</text>
</comment>
<comment type="catalytic activity">
    <reaction evidence="6">
        <text>alpha-D-glucose 1-phosphate + UTP + H(+) = UDP-alpha-D-glucose + diphosphate</text>
        <dbReference type="Rhea" id="RHEA:19889"/>
        <dbReference type="ChEBI" id="CHEBI:15378"/>
        <dbReference type="ChEBI" id="CHEBI:33019"/>
        <dbReference type="ChEBI" id="CHEBI:46398"/>
        <dbReference type="ChEBI" id="CHEBI:58601"/>
        <dbReference type="ChEBI" id="CHEBI:58885"/>
        <dbReference type="EC" id="2.7.7.9"/>
    </reaction>
</comment>
<comment type="subunit">
    <text evidence="4">Homooctamer.</text>
</comment>
<comment type="interaction">
    <interactant intactId="EBI-19987">
        <id>P32861</id>
    </interactant>
    <interactant intactId="EBI-9442">
        <id>P31374</id>
        <label>PSK1</label>
    </interactant>
    <organismsDiffer>false</organismsDiffer>
    <experiments>4</experiments>
</comment>
<comment type="interaction">
    <interactant intactId="EBI-19987">
        <id>P32861</id>
    </interactant>
    <interactant intactId="EBI-9839">
        <id>Q08217</id>
        <label>PSK2</label>
    </interactant>
    <organismsDiffer>false</organismsDiffer>
    <experiments>3</experiments>
</comment>
<comment type="miscellaneous">
    <text evidence="3">Present with 17200 molecules/cell in log phase SD medium.</text>
</comment>
<comment type="similarity">
    <text evidence="8">Belongs to the UDPGP type 1 family.</text>
</comment>
<feature type="initiator methionine" description="Removed" evidence="11">
    <location>
        <position position="1"/>
    </location>
</feature>
<feature type="chain" id="PRO_0000185765" description="UTP--glucose-1-phosphate uridylyltransferase">
    <location>
        <begin position="2"/>
        <end position="499"/>
    </location>
</feature>
<feature type="region of interest" description="Oligomerization">
    <location>
        <begin position="448"/>
        <end position="499"/>
    </location>
</feature>
<feature type="active site" evidence="8">
    <location>
        <position position="388"/>
    </location>
</feature>
<feature type="binding site" evidence="2">
    <location>
        <begin position="109"/>
        <end position="112"/>
    </location>
    <ligand>
        <name>UTP</name>
        <dbReference type="ChEBI" id="CHEBI:46398"/>
    </ligand>
</feature>
<feature type="binding site" evidence="1">
    <location>
        <begin position="111"/>
        <end position="112"/>
    </location>
    <ligand>
        <name>substrate</name>
    </ligand>
</feature>
<feature type="binding site" evidence="8">
    <location>
        <position position="123"/>
    </location>
    <ligand>
        <name>Mg(2+)</name>
        <dbReference type="ChEBI" id="CHEBI:18420"/>
    </ligand>
</feature>
<feature type="binding site" evidence="2">
    <location>
        <position position="123"/>
    </location>
    <ligand>
        <name>UTP</name>
        <dbReference type="ChEBI" id="CHEBI:46398"/>
    </ligand>
</feature>
<feature type="binding site" evidence="2">
    <location>
        <position position="186"/>
    </location>
    <ligand>
        <name>UTP</name>
        <dbReference type="ChEBI" id="CHEBI:46398"/>
    </ligand>
</feature>
<feature type="binding site" evidence="2">
    <location>
        <position position="215"/>
    </location>
    <ligand>
        <name>UTP</name>
        <dbReference type="ChEBI" id="CHEBI:46398"/>
    </ligand>
</feature>
<feature type="binding site" evidence="1">
    <location>
        <position position="216"/>
    </location>
    <ligand>
        <name>substrate</name>
    </ligand>
</feature>
<feature type="binding site" evidence="1">
    <location>
        <begin position="244"/>
        <end position="246"/>
    </location>
    <ligand>
        <name>substrate</name>
    </ligand>
</feature>
<feature type="binding site" evidence="8">
    <location>
        <position position="246"/>
    </location>
    <ligand>
        <name>Mg(2+)</name>
        <dbReference type="ChEBI" id="CHEBI:18420"/>
    </ligand>
</feature>
<feature type="binding site" evidence="2">
    <location>
        <position position="246"/>
    </location>
    <ligand>
        <name>UTP</name>
        <dbReference type="ChEBI" id="CHEBI:46398"/>
    </ligand>
</feature>
<feature type="binding site" evidence="2">
    <location>
        <position position="388"/>
    </location>
    <ligand>
        <name>UTP</name>
        <dbReference type="ChEBI" id="CHEBI:46398"/>
    </ligand>
</feature>
<feature type="modified residue" description="N-acetylserine" evidence="11">
    <location>
        <position position="2"/>
    </location>
</feature>
<feature type="modified residue" description="Phosphoserine" evidence="9">
    <location>
        <position position="17"/>
    </location>
</feature>
<feature type="modified residue" description="Phosphothreonine" evidence="9">
    <location>
        <position position="19"/>
    </location>
</feature>
<feature type="modified residue" description="Phosphoserine" evidence="9">
    <location>
        <position position="21"/>
    </location>
</feature>
<feature type="modified residue" description="Phosphoserine" evidence="10">
    <location>
        <position position="79"/>
    </location>
</feature>
<feature type="modified residue" description="Omega-N-methylarginine" evidence="5">
    <location>
        <position position="369"/>
    </location>
</feature>
<feature type="helix" evidence="12">
    <location>
        <begin position="23"/>
        <end position="30"/>
    </location>
</feature>
<feature type="helix" evidence="12">
    <location>
        <begin position="49"/>
        <end position="67"/>
    </location>
</feature>
<feature type="helix" evidence="12">
    <location>
        <begin position="74"/>
        <end position="76"/>
    </location>
</feature>
<feature type="turn" evidence="12">
    <location>
        <begin position="82"/>
        <end position="84"/>
    </location>
</feature>
<feature type="strand" evidence="12">
    <location>
        <begin position="85"/>
        <end position="87"/>
    </location>
</feature>
<feature type="helix" evidence="12">
    <location>
        <begin position="88"/>
        <end position="92"/>
    </location>
</feature>
<feature type="helix" evidence="12">
    <location>
        <begin position="101"/>
        <end position="103"/>
    </location>
</feature>
<feature type="strand" evidence="12">
    <location>
        <begin position="104"/>
        <end position="109"/>
    </location>
</feature>
<feature type="helix" evidence="12">
    <location>
        <begin position="115"/>
        <end position="117"/>
    </location>
</feature>
<feature type="strand" evidence="12">
    <location>
        <begin position="121"/>
        <end position="123"/>
    </location>
</feature>
<feature type="helix" evidence="12">
    <location>
        <begin position="134"/>
        <end position="149"/>
    </location>
</feature>
<feature type="strand" evidence="12">
    <location>
        <begin position="154"/>
        <end position="158"/>
    </location>
</feature>
<feature type="turn" evidence="12">
    <location>
        <begin position="161"/>
        <end position="163"/>
    </location>
</feature>
<feature type="helix" evidence="12">
    <location>
        <begin position="164"/>
        <end position="171"/>
    </location>
</feature>
<feature type="helix" evidence="12">
    <location>
        <begin position="172"/>
        <end position="174"/>
    </location>
</feature>
<feature type="strand" evidence="12">
    <location>
        <begin position="176"/>
        <end position="178"/>
    </location>
</feature>
<feature type="strand" evidence="12">
    <location>
        <begin position="180"/>
        <end position="184"/>
    </location>
</feature>
<feature type="turn" evidence="12">
    <location>
        <begin position="194"/>
        <end position="196"/>
    </location>
</feature>
<feature type="strand" evidence="12">
    <location>
        <begin position="202"/>
        <end position="206"/>
    </location>
</feature>
<feature type="strand" evidence="12">
    <location>
        <begin position="210"/>
        <end position="212"/>
    </location>
</feature>
<feature type="helix" evidence="12">
    <location>
        <begin position="216"/>
        <end position="218"/>
    </location>
</feature>
<feature type="helix" evidence="12">
    <location>
        <begin position="219"/>
        <end position="226"/>
    </location>
</feature>
<feature type="helix" evidence="12">
    <location>
        <begin position="228"/>
        <end position="234"/>
    </location>
</feature>
<feature type="strand" evidence="12">
    <location>
        <begin position="239"/>
        <end position="243"/>
    </location>
</feature>
<feature type="strand" evidence="12">
    <location>
        <begin position="247"/>
        <end position="249"/>
    </location>
</feature>
<feature type="helix" evidence="12">
    <location>
        <begin position="254"/>
        <end position="262"/>
    </location>
</feature>
<feature type="strand" evidence="12">
    <location>
        <begin position="266"/>
        <end position="273"/>
    </location>
</feature>
<feature type="helix" evidence="12">
    <location>
        <begin position="276"/>
        <end position="278"/>
    </location>
</feature>
<feature type="strand" evidence="12">
    <location>
        <begin position="279"/>
        <end position="281"/>
    </location>
</feature>
<feature type="strand" evidence="12">
    <location>
        <begin position="283"/>
        <end position="287"/>
    </location>
</feature>
<feature type="strand" evidence="12">
    <location>
        <begin position="290"/>
        <end position="294"/>
    </location>
</feature>
<feature type="helix" evidence="12">
    <location>
        <begin position="296"/>
        <end position="298"/>
    </location>
</feature>
<feature type="helix" evidence="12">
    <location>
        <begin position="304"/>
        <end position="307"/>
    </location>
</feature>
<feature type="turn" evidence="12">
    <location>
        <begin position="310"/>
        <end position="312"/>
    </location>
</feature>
<feature type="strand" evidence="12">
    <location>
        <begin position="315"/>
        <end position="324"/>
    </location>
</feature>
<feature type="helix" evidence="12">
    <location>
        <begin position="325"/>
        <end position="333"/>
    </location>
</feature>
<feature type="helix" evidence="12">
    <location>
        <begin position="364"/>
        <end position="370"/>
    </location>
</feature>
<feature type="strand" evidence="12">
    <location>
        <begin position="371"/>
        <end position="373"/>
    </location>
</feature>
<feature type="strand" evidence="12">
    <location>
        <begin position="375"/>
        <end position="379"/>
    </location>
</feature>
<feature type="helix" evidence="12">
    <location>
        <begin position="381"/>
        <end position="383"/>
    </location>
</feature>
<feature type="helix" evidence="12">
    <location>
        <begin position="390"/>
        <end position="396"/>
    </location>
</feature>
<feature type="strand" evidence="12">
    <location>
        <begin position="401"/>
        <end position="404"/>
    </location>
</feature>
<feature type="strand" evidence="12">
    <location>
        <begin position="407"/>
        <end position="410"/>
    </location>
</feature>
<feature type="strand" evidence="12">
    <location>
        <begin position="420"/>
        <end position="423"/>
    </location>
</feature>
<feature type="helix" evidence="12">
    <location>
        <begin position="425"/>
        <end position="427"/>
    </location>
</feature>
<feature type="helix" evidence="12">
    <location>
        <begin position="430"/>
        <end position="436"/>
    </location>
</feature>
<feature type="strand" evidence="12">
    <location>
        <begin position="446"/>
        <end position="457"/>
    </location>
</feature>
<feature type="strand" evidence="12">
    <location>
        <begin position="462"/>
        <end position="470"/>
    </location>
</feature>
<feature type="strand" evidence="12">
    <location>
        <begin position="477"/>
        <end position="479"/>
    </location>
</feature>
<feature type="strand" evidence="12">
    <location>
        <begin position="484"/>
        <end position="498"/>
    </location>
</feature>
<organism>
    <name type="scientific">Saccharomyces cerevisiae (strain ATCC 204508 / S288c)</name>
    <name type="common">Baker's yeast</name>
    <dbReference type="NCBI Taxonomy" id="559292"/>
    <lineage>
        <taxon>Eukaryota</taxon>
        <taxon>Fungi</taxon>
        <taxon>Dikarya</taxon>
        <taxon>Ascomycota</taxon>
        <taxon>Saccharomycotina</taxon>
        <taxon>Saccharomycetes</taxon>
        <taxon>Saccharomycetales</taxon>
        <taxon>Saccharomycetaceae</taxon>
        <taxon>Saccharomyces</taxon>
    </lineage>
</organism>
<gene>
    <name evidence="7" type="primary">UGP1</name>
    <name type="ordered locus">YKL035W</name>
    <name type="ORF">YKL248</name>
</gene>
<evidence type="ECO:0000250" key="1">
    <source>
        <dbReference type="UniProtKB" id="Q16851"/>
    </source>
</evidence>
<evidence type="ECO:0000250" key="2">
    <source>
        <dbReference type="UniProtKB" id="Q9M9P3"/>
    </source>
</evidence>
<evidence type="ECO:0000269" key="3">
    <source>
    </source>
</evidence>
<evidence type="ECO:0000269" key="4">
    <source>
    </source>
</evidence>
<evidence type="ECO:0000269" key="5">
    <source>
    </source>
</evidence>
<evidence type="ECO:0000269" key="6">
    <source>
    </source>
</evidence>
<evidence type="ECO:0000303" key="7">
    <source>
    </source>
</evidence>
<evidence type="ECO:0000305" key="8"/>
<evidence type="ECO:0007744" key="9">
    <source>
    </source>
</evidence>
<evidence type="ECO:0007744" key="10">
    <source>
    </source>
</evidence>
<evidence type="ECO:0007744" key="11">
    <source>
    </source>
</evidence>
<evidence type="ECO:0007829" key="12">
    <source>
        <dbReference type="PDB" id="2I5K"/>
    </source>
</evidence>
<protein>
    <recommendedName>
        <fullName evidence="8">UTP--glucose-1-phosphate uridylyltransferase</fullName>
        <ecNumber evidence="6">2.7.7.9</ecNumber>
    </recommendedName>
    <alternativeName>
        <fullName evidence="7">UDP-glucose pyrophosphorylase</fullName>
        <shortName evidence="7">UDPGP</shortName>
        <shortName evidence="7">UGPase</shortName>
    </alternativeName>
</protein>
<keyword id="KW-0002">3D-structure</keyword>
<keyword id="KW-0007">Acetylation</keyword>
<keyword id="KW-0460">Magnesium</keyword>
<keyword id="KW-0479">Metal-binding</keyword>
<keyword id="KW-0488">Methylation</keyword>
<keyword id="KW-0548">Nucleotidyltransferase</keyword>
<keyword id="KW-0597">Phosphoprotein</keyword>
<keyword id="KW-1185">Reference proteome</keyword>
<keyword id="KW-0808">Transferase</keyword>
<accession>P32861</accession>
<accession>D6VXQ0</accession>
<reference key="1">
    <citation type="journal article" date="1992" name="Yeast">
        <title>The sequence of a 12 kb fragment on the left arm of yeast chromosome XI reveals five new open reading frames, including a zinc finger protein and a homolog of the UDP-glucose pyrophosphorylase from potato.</title>
        <authorList>
            <person name="Purnelle B."/>
            <person name="Skala J."/>
            <person name="van Dyck L."/>
            <person name="Goffeau A."/>
        </authorList>
    </citation>
    <scope>NUCLEOTIDE SEQUENCE [GENOMIC DNA]</scope>
    <source>
        <strain>ATCC 204508 / S288c</strain>
    </source>
</reference>
<reference key="2">
    <citation type="journal article" date="1994" name="Nature">
        <title>Complete DNA sequence of yeast chromosome XI.</title>
        <authorList>
            <person name="Dujon B."/>
            <person name="Alexandraki D."/>
            <person name="Andre B."/>
            <person name="Ansorge W."/>
            <person name="Baladron V."/>
            <person name="Ballesta J.P.G."/>
            <person name="Banrevi A."/>
            <person name="Bolle P.-A."/>
            <person name="Bolotin-Fukuhara M."/>
            <person name="Bossier P."/>
            <person name="Bou G."/>
            <person name="Boyer J."/>
            <person name="Buitrago M.J."/>
            <person name="Cheret G."/>
            <person name="Colleaux L."/>
            <person name="Daignan-Fornier B."/>
            <person name="del Rey F."/>
            <person name="Dion C."/>
            <person name="Domdey H."/>
            <person name="Duesterhoeft A."/>
            <person name="Duesterhus S."/>
            <person name="Entian K.-D."/>
            <person name="Erfle H."/>
            <person name="Esteban P.F."/>
            <person name="Feldmann H."/>
            <person name="Fernandes L."/>
            <person name="Fobo G.M."/>
            <person name="Fritz C."/>
            <person name="Fukuhara H."/>
            <person name="Gabel C."/>
            <person name="Gaillon L."/>
            <person name="Garcia-Cantalejo J.M."/>
            <person name="Garcia-Ramirez J.J."/>
            <person name="Gent M.E."/>
            <person name="Ghazvini M."/>
            <person name="Goffeau A."/>
            <person name="Gonzalez A."/>
            <person name="Grothues D."/>
            <person name="Guerreiro P."/>
            <person name="Hegemann J.H."/>
            <person name="Hewitt N."/>
            <person name="Hilger F."/>
            <person name="Hollenberg C.P."/>
            <person name="Horaitis O."/>
            <person name="Indge K.J."/>
            <person name="Jacquier A."/>
            <person name="James C.M."/>
            <person name="Jauniaux J.-C."/>
            <person name="Jimenez A."/>
            <person name="Keuchel H."/>
            <person name="Kirchrath L."/>
            <person name="Kleine K."/>
            <person name="Koetter P."/>
            <person name="Legrain P."/>
            <person name="Liebl S."/>
            <person name="Louis E.J."/>
            <person name="Maia e Silva A."/>
            <person name="Marck C."/>
            <person name="Monnier A.-L."/>
            <person name="Moestl D."/>
            <person name="Mueller S."/>
            <person name="Obermaier B."/>
            <person name="Oliver S.G."/>
            <person name="Pallier C."/>
            <person name="Pascolo S."/>
            <person name="Pfeiffer F."/>
            <person name="Philippsen P."/>
            <person name="Planta R.J."/>
            <person name="Pohl F.M."/>
            <person name="Pohl T.M."/>
            <person name="Poehlmann R."/>
            <person name="Portetelle D."/>
            <person name="Purnelle B."/>
            <person name="Puzos V."/>
            <person name="Ramezani Rad M."/>
            <person name="Rasmussen S.W."/>
            <person name="Remacha M.A."/>
            <person name="Revuelta J.L."/>
            <person name="Richard G.-F."/>
            <person name="Rieger M."/>
            <person name="Rodrigues-Pousada C."/>
            <person name="Rose M."/>
            <person name="Rupp T."/>
            <person name="Santos M.A."/>
            <person name="Schwager C."/>
            <person name="Sensen C."/>
            <person name="Skala J."/>
            <person name="Soares H."/>
            <person name="Sor F."/>
            <person name="Stegemann J."/>
            <person name="Tettelin H."/>
            <person name="Thierry A."/>
            <person name="Tzermia M."/>
            <person name="Urrestarazu L.A."/>
            <person name="van Dyck L."/>
            <person name="van Vliet-Reedijk J.C."/>
            <person name="Valens M."/>
            <person name="Vandenbol M."/>
            <person name="Vilela C."/>
            <person name="Vissers S."/>
            <person name="von Wettstein D."/>
            <person name="Voss H."/>
            <person name="Wiemann S."/>
            <person name="Xu G."/>
            <person name="Zimmermann J."/>
            <person name="Haasemann M."/>
            <person name="Becker I."/>
            <person name="Mewes H.-W."/>
        </authorList>
    </citation>
    <scope>NUCLEOTIDE SEQUENCE [LARGE SCALE GENOMIC DNA]</scope>
    <source>
        <strain>ATCC 204508 / S288c</strain>
    </source>
</reference>
<reference key="3">
    <citation type="journal article" date="2014" name="G3 (Bethesda)">
        <title>The reference genome sequence of Saccharomyces cerevisiae: Then and now.</title>
        <authorList>
            <person name="Engel S.R."/>
            <person name="Dietrich F.S."/>
            <person name="Fisk D.G."/>
            <person name="Binkley G."/>
            <person name="Balakrishnan R."/>
            <person name="Costanzo M.C."/>
            <person name="Dwight S.S."/>
            <person name="Hitz B.C."/>
            <person name="Karra K."/>
            <person name="Nash R.S."/>
            <person name="Weng S."/>
            <person name="Wong E.D."/>
            <person name="Lloyd P."/>
            <person name="Skrzypek M.S."/>
            <person name="Miyasato S.R."/>
            <person name="Simison M."/>
            <person name="Cherry J.M."/>
        </authorList>
    </citation>
    <scope>GENOME REANNOTATION</scope>
    <source>
        <strain>ATCC 204508 / S288c</strain>
    </source>
</reference>
<reference key="4">
    <citation type="journal article" date="1995" name="Eur. J. Biochem.">
        <title>Genetic and biochemical characterization of the UGP1 gene encoding the UDP-glucose pyrophosphorylase from Saccharomyces cerevisiae.</title>
        <authorList>
            <person name="Daran J.M."/>
            <person name="Dallies N."/>
            <person name="Thines-Sempoux D."/>
            <person name="Paquet V."/>
            <person name="Francois J."/>
        </authorList>
    </citation>
    <scope>FUNCTION</scope>
    <scope>CATALYTIC ACTIVITY</scope>
</reference>
<reference key="5">
    <citation type="journal article" date="2003" name="Nature">
        <title>Global analysis of protein expression in yeast.</title>
        <authorList>
            <person name="Ghaemmaghami S."/>
            <person name="Huh W.-K."/>
            <person name="Bower K."/>
            <person name="Howson R.W."/>
            <person name="Belle A."/>
            <person name="Dephoure N."/>
            <person name="O'Shea E.K."/>
            <person name="Weissman J.S."/>
        </authorList>
    </citation>
    <scope>LEVEL OF PROTEIN EXPRESSION [LARGE SCALE ANALYSIS]</scope>
</reference>
<reference key="6">
    <citation type="journal article" date="2007" name="J. Proteome Res.">
        <title>Large-scale phosphorylation analysis of alpha-factor-arrested Saccharomyces cerevisiae.</title>
        <authorList>
            <person name="Li X."/>
            <person name="Gerber S.A."/>
            <person name="Rudner A.D."/>
            <person name="Beausoleil S.A."/>
            <person name="Haas W."/>
            <person name="Villen J."/>
            <person name="Elias J.E."/>
            <person name="Gygi S.P."/>
        </authorList>
    </citation>
    <scope>IDENTIFICATION BY MASS SPECTROMETRY [LARGE SCALE ANALYSIS]</scope>
    <source>
        <strain>ADR376</strain>
    </source>
</reference>
<reference key="7">
    <citation type="journal article" date="2007" name="Proc. Natl. Acad. Sci. U.S.A.">
        <title>Analysis of phosphorylation sites on proteins from Saccharomyces cerevisiae by electron transfer dissociation (ETD) mass spectrometry.</title>
        <authorList>
            <person name="Chi A."/>
            <person name="Huttenhower C."/>
            <person name="Geer L.Y."/>
            <person name="Coon J.J."/>
            <person name="Syka J.E.P."/>
            <person name="Bai D.L."/>
            <person name="Shabanowitz J."/>
            <person name="Burke D.J."/>
            <person name="Troyanskaya O.G."/>
            <person name="Hunt D.F."/>
        </authorList>
    </citation>
    <scope>PHOSPHORYLATION [LARGE SCALE ANALYSIS] AT SER-17; THR-19 AND SER-21</scope>
    <scope>IDENTIFICATION BY MASS SPECTROMETRY [LARGE SCALE ANALYSIS]</scope>
</reference>
<reference key="8">
    <citation type="journal article" date="2008" name="Mol. Cell. Proteomics">
        <title>A multidimensional chromatography technology for in-depth phosphoproteome analysis.</title>
        <authorList>
            <person name="Albuquerque C.P."/>
            <person name="Smolka M.B."/>
            <person name="Payne S.H."/>
            <person name="Bafna V."/>
            <person name="Eng J."/>
            <person name="Zhou H."/>
        </authorList>
    </citation>
    <scope>PHOSPHORYLATION [LARGE SCALE ANALYSIS] AT SER-79</scope>
    <scope>IDENTIFICATION BY MASS SPECTROMETRY [LARGE SCALE ANALYSIS]</scope>
</reference>
<reference key="9">
    <citation type="journal article" date="2009" name="Science">
        <title>Global analysis of Cdk1 substrate phosphorylation sites provides insights into evolution.</title>
        <authorList>
            <person name="Holt L.J."/>
            <person name="Tuch B.B."/>
            <person name="Villen J."/>
            <person name="Johnson A.D."/>
            <person name="Gygi S.P."/>
            <person name="Morgan D.O."/>
        </authorList>
    </citation>
    <scope>IDENTIFICATION BY MASS SPECTROMETRY [LARGE SCALE ANALYSIS]</scope>
</reference>
<reference key="10">
    <citation type="journal article" date="2012" name="Proc. Natl. Acad. Sci. U.S.A.">
        <title>N-terminal acetylome analyses and functional insights of the N-terminal acetyltransferase NatB.</title>
        <authorList>
            <person name="Van Damme P."/>
            <person name="Lasa M."/>
            <person name="Polevoda B."/>
            <person name="Gazquez C."/>
            <person name="Elosegui-Artola A."/>
            <person name="Kim D.S."/>
            <person name="De Juan-Pardo E."/>
            <person name="Demeyer K."/>
            <person name="Hole K."/>
            <person name="Larrea E."/>
            <person name="Timmerman E."/>
            <person name="Prieto J."/>
            <person name="Arnesen T."/>
            <person name="Sherman F."/>
            <person name="Gevaert K."/>
            <person name="Aldabe R."/>
        </authorList>
    </citation>
    <scope>ACETYLATION [LARGE SCALE ANALYSIS] AT SER-2</scope>
    <scope>CLEAVAGE OF INITIATOR METHIONINE [LARGE SCALE ANALYSIS]</scope>
    <scope>IDENTIFICATION BY MASS SPECTROMETRY [LARGE SCALE ANALYSIS]</scope>
</reference>
<reference key="11">
    <citation type="journal article" date="2013" name="J. Proteome Res.">
        <title>Analysis of the proteome of Saccharomyces cerevisiae for methylarginine.</title>
        <authorList>
            <person name="Low J.K."/>
            <person name="Hart-Smith G."/>
            <person name="Erce M.A."/>
            <person name="Wilkins M.R."/>
        </authorList>
    </citation>
    <scope>METHYLATION AT ARG-369</scope>
</reference>
<reference key="12">
    <citation type="journal article" date="2006" name="J. Mol. Biol.">
        <title>Structural basis for subunit assembly in UDP-glucose pyrophosphorylase from Saccharomyces cerevisiae.</title>
        <authorList>
            <person name="Roeben A."/>
            <person name="Plitzko J.M."/>
            <person name="Korner R."/>
            <person name="Bottcher U.M."/>
            <person name="Siegers K."/>
            <person name="Hayer-Hartl M."/>
            <person name="Bracher A."/>
        </authorList>
    </citation>
    <scope>X-RAY CRYSTALLOGRAPHY (3.1 ANGSTROMS) OF 12-499</scope>
    <scope>SUBUNIT</scope>
    <scope>OLIGOMERIZATION REGION</scope>
    <scope>PROBABLE MAGNESIUM-BINDING SITES</scope>
</reference>
<dbReference type="EC" id="2.7.7.9" evidence="6"/>
<dbReference type="EMBL" id="X69584">
    <property type="protein sequence ID" value="CAA49303.1"/>
    <property type="molecule type" value="Genomic_DNA"/>
</dbReference>
<dbReference type="EMBL" id="Z28035">
    <property type="protein sequence ID" value="CAA81872.1"/>
    <property type="molecule type" value="Genomic_DNA"/>
</dbReference>
<dbReference type="EMBL" id="BK006944">
    <property type="protein sequence ID" value="DAA09120.1"/>
    <property type="molecule type" value="Genomic_DNA"/>
</dbReference>
<dbReference type="PIR" id="S30007">
    <property type="entry name" value="S30007"/>
</dbReference>
<dbReference type="RefSeq" id="NP_012889.3">
    <property type="nucleotide sequence ID" value="NM_001179601.3"/>
</dbReference>
<dbReference type="PDB" id="2I5K">
    <property type="method" value="X-ray"/>
    <property type="resolution" value="3.10 A"/>
    <property type="chains" value="A/B=12-499"/>
</dbReference>
<dbReference type="PDBsum" id="2I5K"/>
<dbReference type="SMR" id="P32861"/>
<dbReference type="BioGRID" id="34096">
    <property type="interactions" value="192"/>
</dbReference>
<dbReference type="DIP" id="DIP-4534N"/>
<dbReference type="FunCoup" id="P32861">
    <property type="interactions" value="1182"/>
</dbReference>
<dbReference type="IntAct" id="P32861">
    <property type="interactions" value="44"/>
</dbReference>
<dbReference type="MINT" id="P32861"/>
<dbReference type="STRING" id="4932.YKL035W"/>
<dbReference type="GlyGen" id="P32861">
    <property type="glycosylation" value="2 sites, 1 O-linked glycan (2 sites)"/>
</dbReference>
<dbReference type="iPTMnet" id="P32861"/>
<dbReference type="PaxDb" id="4932-YKL035W"/>
<dbReference type="PeptideAtlas" id="P32861"/>
<dbReference type="EnsemblFungi" id="YKL035W_mRNA">
    <property type="protein sequence ID" value="YKL035W"/>
    <property type="gene ID" value="YKL035W"/>
</dbReference>
<dbReference type="GeneID" id="853830"/>
<dbReference type="KEGG" id="sce:YKL035W"/>
<dbReference type="AGR" id="SGD:S000001518"/>
<dbReference type="SGD" id="S000001518">
    <property type="gene designation" value="UGP1"/>
</dbReference>
<dbReference type="VEuPathDB" id="FungiDB:YKL035W"/>
<dbReference type="eggNOG" id="KOG2638">
    <property type="taxonomic scope" value="Eukaryota"/>
</dbReference>
<dbReference type="GeneTree" id="ENSGT00940000153464"/>
<dbReference type="HOGENOM" id="CLU_023632_3_0_1"/>
<dbReference type="InParanoid" id="P32861"/>
<dbReference type="OMA" id="KEYCFLS"/>
<dbReference type="OrthoDB" id="932129at2759"/>
<dbReference type="BioCyc" id="MetaCyc:YKL035W-MONOMER"/>
<dbReference type="BioCyc" id="YEAST:YKL035W-MONOMER"/>
<dbReference type="BRENDA" id="2.7.7.9">
    <property type="organism ID" value="984"/>
</dbReference>
<dbReference type="Reactome" id="R-SCE-173599">
    <property type="pathway name" value="Formation of the active cofactor, UDP-glucuronate"/>
</dbReference>
<dbReference type="Reactome" id="R-SCE-3322077">
    <property type="pathway name" value="Glycogen synthesis"/>
</dbReference>
<dbReference type="BioGRID-ORCS" id="853830">
    <property type="hits" value="4 hits in 10 CRISPR screens"/>
</dbReference>
<dbReference type="CD-CODE" id="E03F929F">
    <property type="entry name" value="Stress granule"/>
</dbReference>
<dbReference type="ChiTaRS" id="UGP1">
    <property type="organism name" value="yeast"/>
</dbReference>
<dbReference type="EvolutionaryTrace" id="P32861"/>
<dbReference type="PRO" id="PR:P32861"/>
<dbReference type="Proteomes" id="UP000002311">
    <property type="component" value="Chromosome XI"/>
</dbReference>
<dbReference type="RNAct" id="P32861">
    <property type="molecule type" value="protein"/>
</dbReference>
<dbReference type="GO" id="GO:0005737">
    <property type="term" value="C:cytoplasm"/>
    <property type="evidence" value="ECO:0007005"/>
    <property type="project" value="SGD"/>
</dbReference>
<dbReference type="GO" id="GO:0010494">
    <property type="term" value="C:cytoplasmic stress granule"/>
    <property type="evidence" value="ECO:0007005"/>
    <property type="project" value="SGD"/>
</dbReference>
<dbReference type="GO" id="GO:0005886">
    <property type="term" value="C:plasma membrane"/>
    <property type="evidence" value="ECO:0007005"/>
    <property type="project" value="SGD"/>
</dbReference>
<dbReference type="GO" id="GO:0046872">
    <property type="term" value="F:metal ion binding"/>
    <property type="evidence" value="ECO:0007669"/>
    <property type="project" value="UniProtKB-KW"/>
</dbReference>
<dbReference type="GO" id="GO:0070569">
    <property type="term" value="F:uridylyltransferase activity"/>
    <property type="evidence" value="ECO:0000314"/>
    <property type="project" value="SGD"/>
</dbReference>
<dbReference type="GO" id="GO:0003983">
    <property type="term" value="F:UTP:glucose-1-phosphate uridylyltransferase activity"/>
    <property type="evidence" value="ECO:0000314"/>
    <property type="project" value="FlyBase"/>
</dbReference>
<dbReference type="GO" id="GO:0006078">
    <property type="term" value="P:(1-&gt;6)-beta-D-glucan biosynthetic process"/>
    <property type="evidence" value="ECO:0000315"/>
    <property type="project" value="SGD"/>
</dbReference>
<dbReference type="GO" id="GO:0005978">
    <property type="term" value="P:glycogen biosynthetic process"/>
    <property type="evidence" value="ECO:0000315"/>
    <property type="project" value="SGD"/>
</dbReference>
<dbReference type="GO" id="GO:0005977">
    <property type="term" value="P:glycogen metabolic process"/>
    <property type="evidence" value="ECO:0000318"/>
    <property type="project" value="GO_Central"/>
</dbReference>
<dbReference type="GO" id="GO:0005992">
    <property type="term" value="P:trehalose biosynthetic process"/>
    <property type="evidence" value="ECO:0000316"/>
    <property type="project" value="SGD"/>
</dbReference>
<dbReference type="GO" id="GO:0006011">
    <property type="term" value="P:UDP-alpha-D-glucose metabolic process"/>
    <property type="evidence" value="ECO:0000314"/>
    <property type="project" value="FlyBase"/>
</dbReference>
<dbReference type="CDD" id="cd00897">
    <property type="entry name" value="UGPase_euk"/>
    <property type="match status" value="1"/>
</dbReference>
<dbReference type="FunFam" id="2.160.10.10:FF:000001">
    <property type="entry name" value="UTP--glucose-1-phosphate uridylyltransferase"/>
    <property type="match status" value="1"/>
</dbReference>
<dbReference type="FunFam" id="3.90.550.10:FF:000002">
    <property type="entry name" value="UTP--glucose-1-phosphate uridylyltransferase"/>
    <property type="match status" value="1"/>
</dbReference>
<dbReference type="Gene3D" id="2.160.10.10">
    <property type="entry name" value="Hexapeptide repeat proteins"/>
    <property type="match status" value="1"/>
</dbReference>
<dbReference type="Gene3D" id="3.90.550.10">
    <property type="entry name" value="Spore Coat Polysaccharide Biosynthesis Protein SpsA, Chain A"/>
    <property type="match status" value="1"/>
</dbReference>
<dbReference type="InterPro" id="IPR029044">
    <property type="entry name" value="Nucleotide-diphossugar_trans"/>
</dbReference>
<dbReference type="InterPro" id="IPR002618">
    <property type="entry name" value="UDPGP_fam"/>
</dbReference>
<dbReference type="InterPro" id="IPR016267">
    <property type="entry name" value="UDPGP_trans"/>
</dbReference>
<dbReference type="PANTHER" id="PTHR43511">
    <property type="match status" value="1"/>
</dbReference>
<dbReference type="Pfam" id="PF01704">
    <property type="entry name" value="UDPGP"/>
    <property type="match status" value="1"/>
</dbReference>
<dbReference type="PIRSF" id="PIRSF000806">
    <property type="entry name" value="UDPGP"/>
    <property type="match status" value="1"/>
</dbReference>
<dbReference type="SUPFAM" id="SSF53448">
    <property type="entry name" value="Nucleotide-diphospho-sugar transferases"/>
    <property type="match status" value="1"/>
</dbReference>
<proteinExistence type="evidence at protein level"/>